<reference key="1">
    <citation type="submission" date="2007-02" db="EMBL/GenBank/DDBJ databases">
        <title>Complete sequence of chromosome 2 of Rhodobacter sphaeroides ATCC 17029.</title>
        <authorList>
            <person name="Copeland A."/>
            <person name="Lucas S."/>
            <person name="Lapidus A."/>
            <person name="Barry K."/>
            <person name="Detter J.C."/>
            <person name="Glavina del Rio T."/>
            <person name="Hammon N."/>
            <person name="Israni S."/>
            <person name="Dalin E."/>
            <person name="Tice H."/>
            <person name="Pitluck S."/>
            <person name="Kiss H."/>
            <person name="Brettin T."/>
            <person name="Bruce D."/>
            <person name="Han C."/>
            <person name="Tapia R."/>
            <person name="Gilna P."/>
            <person name="Schmutz J."/>
            <person name="Larimer F."/>
            <person name="Land M."/>
            <person name="Hauser L."/>
            <person name="Kyrpides N."/>
            <person name="Mikhailova N."/>
            <person name="Richardson P."/>
            <person name="Mackenzie C."/>
            <person name="Choudhary M."/>
            <person name="Donohue T.J."/>
            <person name="Kaplan S."/>
        </authorList>
    </citation>
    <scope>NUCLEOTIDE SEQUENCE [LARGE SCALE GENOMIC DNA]</scope>
    <source>
        <strain>ATCC 17029 / ATH 2.4.9</strain>
    </source>
</reference>
<proteinExistence type="inferred from homology"/>
<comment type="function">
    <text evidence="1">Part of a membrane-bound complex that couples electron transfer with translocation of ions across the membrane.</text>
</comment>
<comment type="subunit">
    <text evidence="1">The complex is composed of six subunits: RnfA, RnfB, RnfC, RnfD, RnfE and RnfG.</text>
</comment>
<comment type="subcellular location">
    <subcellularLocation>
        <location evidence="1">Cellular chromatophore membrane</location>
        <topology evidence="1">Multi-pass membrane protein</topology>
    </subcellularLocation>
</comment>
<comment type="similarity">
    <text evidence="1">Belongs to the NqrDE/RnfAE family.</text>
</comment>
<gene>
    <name evidence="1" type="primary">rnfA</name>
    <name type="ordered locus">Rsph17029_3931</name>
</gene>
<accession>A3PRP3</accession>
<protein>
    <recommendedName>
        <fullName evidence="1">Ion-translocating oxidoreductase complex subunit A</fullName>
        <ecNumber evidence="1">7.-.-.-</ecNumber>
    </recommendedName>
    <alternativeName>
        <fullName evidence="1">Rnf electron transport complex subunit A</fullName>
    </alternativeName>
</protein>
<sequence length="193" mass="20229">MGDFFFILLSTALVNNVVLVKFLGLCPFMGVSRKTDAAIGMGLATTFVLTLAAGASWMVEALILEPLDLTFLRILSLILVIAAIVQFIEVVMRKLAPGLHRALGIYLPLITTNCAVLGVALLNIQEGHGLASSLLYGFGSASGFTLVLVIFAGMRERLAQLSVPGPFAGAPIAFISAGLLSMAFMGFAGLAPN</sequence>
<organism>
    <name type="scientific">Cereibacter sphaeroides (strain ATCC 17029 / ATH 2.4.9)</name>
    <name type="common">Rhodobacter sphaeroides</name>
    <dbReference type="NCBI Taxonomy" id="349101"/>
    <lineage>
        <taxon>Bacteria</taxon>
        <taxon>Pseudomonadati</taxon>
        <taxon>Pseudomonadota</taxon>
        <taxon>Alphaproteobacteria</taxon>
        <taxon>Rhodobacterales</taxon>
        <taxon>Paracoccaceae</taxon>
        <taxon>Cereibacter</taxon>
    </lineage>
</organism>
<keyword id="KW-0249">Electron transport</keyword>
<keyword id="KW-0472">Membrane</keyword>
<keyword id="KW-0535">Nitrogen fixation</keyword>
<keyword id="KW-1278">Translocase</keyword>
<keyword id="KW-0812">Transmembrane</keyword>
<keyword id="KW-1133">Transmembrane helix</keyword>
<keyword id="KW-0813">Transport</keyword>
<dbReference type="EC" id="7.-.-.-" evidence="1"/>
<dbReference type="EMBL" id="CP000578">
    <property type="protein sequence ID" value="ABN79009.1"/>
    <property type="molecule type" value="Genomic_DNA"/>
</dbReference>
<dbReference type="SMR" id="A3PRP3"/>
<dbReference type="KEGG" id="rsh:Rsph17029_3931"/>
<dbReference type="HOGENOM" id="CLU_095255_1_0_5"/>
<dbReference type="GO" id="GO:0005886">
    <property type="term" value="C:plasma membrane"/>
    <property type="evidence" value="ECO:0007669"/>
    <property type="project" value="TreeGrafter"/>
</dbReference>
<dbReference type="GO" id="GO:0042717">
    <property type="term" value="C:plasma membrane-derived chromatophore membrane"/>
    <property type="evidence" value="ECO:0007669"/>
    <property type="project" value="UniProtKB-SubCell"/>
</dbReference>
<dbReference type="GO" id="GO:0022900">
    <property type="term" value="P:electron transport chain"/>
    <property type="evidence" value="ECO:0007669"/>
    <property type="project" value="UniProtKB-UniRule"/>
</dbReference>
<dbReference type="GO" id="GO:0009399">
    <property type="term" value="P:nitrogen fixation"/>
    <property type="evidence" value="ECO:0007669"/>
    <property type="project" value="UniProtKB-UniRule"/>
</dbReference>
<dbReference type="HAMAP" id="MF_00459">
    <property type="entry name" value="RsxA_RnfA"/>
    <property type="match status" value="1"/>
</dbReference>
<dbReference type="InterPro" id="IPR011293">
    <property type="entry name" value="Ion_transpt_RnfA/RsxA"/>
</dbReference>
<dbReference type="InterPro" id="IPR003667">
    <property type="entry name" value="NqrDE/RnfAE"/>
</dbReference>
<dbReference type="InterPro" id="IPR050133">
    <property type="entry name" value="NqrDE/RnfAE_oxidrdctase"/>
</dbReference>
<dbReference type="NCBIfam" id="NF003481">
    <property type="entry name" value="PRK05151.1"/>
    <property type="match status" value="1"/>
</dbReference>
<dbReference type="NCBIfam" id="TIGR01943">
    <property type="entry name" value="rnfA"/>
    <property type="match status" value="1"/>
</dbReference>
<dbReference type="PANTHER" id="PTHR30335">
    <property type="entry name" value="INTEGRAL MEMBRANE PROTEIN OF SOXR-REDUCING COMPLEX"/>
    <property type="match status" value="1"/>
</dbReference>
<dbReference type="PANTHER" id="PTHR30335:SF0">
    <property type="entry name" value="ION-TRANSLOCATING OXIDOREDUCTASE COMPLEX SUBUNIT A"/>
    <property type="match status" value="1"/>
</dbReference>
<dbReference type="Pfam" id="PF02508">
    <property type="entry name" value="Rnf-Nqr"/>
    <property type="match status" value="1"/>
</dbReference>
<dbReference type="PIRSF" id="PIRSF006102">
    <property type="entry name" value="NQR_DE"/>
    <property type="match status" value="1"/>
</dbReference>
<evidence type="ECO:0000255" key="1">
    <source>
        <dbReference type="HAMAP-Rule" id="MF_00459"/>
    </source>
</evidence>
<name>RNFA_CERS1</name>
<feature type="chain" id="PRO_1000013542" description="Ion-translocating oxidoreductase complex subunit A">
    <location>
        <begin position="1"/>
        <end position="193"/>
    </location>
</feature>
<feature type="transmembrane region" description="Helical" evidence="1">
    <location>
        <begin position="4"/>
        <end position="24"/>
    </location>
</feature>
<feature type="transmembrane region" description="Helical" evidence="1">
    <location>
        <begin position="39"/>
        <end position="59"/>
    </location>
</feature>
<feature type="transmembrane region" description="Helical" evidence="1">
    <location>
        <begin position="71"/>
        <end position="91"/>
    </location>
</feature>
<feature type="transmembrane region" description="Helical" evidence="1">
    <location>
        <begin position="102"/>
        <end position="122"/>
    </location>
</feature>
<feature type="transmembrane region" description="Helical" evidence="1">
    <location>
        <begin position="134"/>
        <end position="154"/>
    </location>
</feature>
<feature type="transmembrane region" description="Helical" evidence="1">
    <location>
        <begin position="167"/>
        <end position="187"/>
    </location>
</feature>